<sequence length="635" mass="68615">MAMSLLQDWCRSLDVDAHRALLVTGIPEGLEQADVEAVLQPTLLPLGTFRLRHMKALMNEKAQAALVEFVEDVNHAAIPREIPGKDGVWRVLWKDRAQDTRVLRQMRRLLLDDGPTQAAEAGTPGEAPTPPASETQAQDSGEVTGQAGSLLGAARNPRRGRRGRRNRTRRNRLTQKGKKRSRGGRPSAPARSEAEDSSDESLGIVIEEIDQGDLSGEEDQSALYATLQAAARELVRQWAPCNSEGEEDGPREFLALVTVTDKSKKEEAEKEPAGAESIRLNTKEDKNGVPDLVALLAVRDTPDEEPVDSDTSESDSQESGDQETEELDNPEFVAIVAYTDPSDPWAREEMLKIASVIESLGWSDEKDKRDPLRQVLSVMSKDTNGTRVKVEEAGREVDAVVLRKAGDDGDLRECISTLAQPDLPPQAKKAGRGLFGGWSEHREDEGGLLELVALLAAQDMAEVMKEEKENAWEGGKYKYPKGKLGEVLALLAARENMGSNEGSEEASDEQSEEESEDTESEASEPEDRASRKPRAKRARTAPRGLTPAGAPPTASGARKTRAGGRGRGRGVTPEKKAGSRGSAQDDAAGSRKKKGSAGAGAHARAGEAKGQAPTGSKAARGKKARRGRRLPPKCR</sequence>
<proteinExistence type="evidence at protein level"/>
<keyword id="KW-0025">Alternative splicing</keyword>
<keyword id="KW-1267">Proteomics identification</keyword>
<keyword id="KW-1185">Reference proteome</keyword>
<feature type="chain" id="PRO_0000325839" description="Paraneoplastic antigen-like protein 8B">
    <location>
        <begin position="1"/>
        <end position="635"/>
    </location>
</feature>
<feature type="region of interest" description="Disordered" evidence="1">
    <location>
        <begin position="115"/>
        <end position="202"/>
    </location>
</feature>
<feature type="region of interest" description="Disordered" evidence="1">
    <location>
        <begin position="260"/>
        <end position="332"/>
    </location>
</feature>
<feature type="region of interest" description="Disordered" evidence="1">
    <location>
        <begin position="492"/>
        <end position="635"/>
    </location>
</feature>
<feature type="compositionally biased region" description="Polar residues" evidence="1">
    <location>
        <begin position="133"/>
        <end position="147"/>
    </location>
</feature>
<feature type="compositionally biased region" description="Basic residues" evidence="1">
    <location>
        <begin position="156"/>
        <end position="183"/>
    </location>
</feature>
<feature type="compositionally biased region" description="Basic and acidic residues" evidence="1">
    <location>
        <begin position="261"/>
        <end position="273"/>
    </location>
</feature>
<feature type="compositionally biased region" description="Acidic residues" evidence="1">
    <location>
        <begin position="302"/>
        <end position="329"/>
    </location>
</feature>
<feature type="compositionally biased region" description="Acidic residues" evidence="1">
    <location>
        <begin position="502"/>
        <end position="524"/>
    </location>
</feature>
<feature type="compositionally biased region" description="Basic residues" evidence="1">
    <location>
        <begin position="531"/>
        <end position="540"/>
    </location>
</feature>
<feature type="compositionally biased region" description="Low complexity" evidence="1">
    <location>
        <begin position="541"/>
        <end position="557"/>
    </location>
</feature>
<feature type="compositionally biased region" description="Basic residues" evidence="1">
    <location>
        <begin position="558"/>
        <end position="568"/>
    </location>
</feature>
<feature type="compositionally biased region" description="Basic residues" evidence="1">
    <location>
        <begin position="619"/>
        <end position="635"/>
    </location>
</feature>
<feature type="splice variant" id="VSP_059423" description="In isoform 1." evidence="2">
    <original>EEDGPREFLALVTVTDKSKKEEAEKEPAGAESIR</original>
    <variation>GPCPTCPWEGIGGFGCDLTVQTRLSQSYVRDTQM</variation>
    <location>
        <begin position="246"/>
        <end position="279"/>
    </location>
</feature>
<feature type="splice variant" id="VSP_059424" description="In isoform 1." evidence="2">
    <location>
        <begin position="280"/>
        <end position="635"/>
    </location>
</feature>
<feature type="sequence conflict" description="In Ref. 1; BAC85931." evidence="3" ref="1">
    <original>GP</original>
    <variation>A</variation>
    <location>
        <begin position="249"/>
        <end position="250"/>
    </location>
</feature>
<feature type="sequence conflict" description="In Ref. 3; BAA86497." evidence="3" ref="3">
    <original>G</original>
    <variation>GGR</variation>
    <location>
        <position position="563"/>
    </location>
</feature>
<feature type="sequence conflict" description="In Ref. 3; BAA86497." evidence="3" ref="3">
    <original>A</original>
    <variation>S</variation>
    <location>
        <position position="599"/>
    </location>
</feature>
<reference key="1">
    <citation type="journal article" date="2004" name="Nat. Genet.">
        <title>Complete sequencing and characterization of 21,243 full-length human cDNAs.</title>
        <authorList>
            <person name="Ota T."/>
            <person name="Suzuki Y."/>
            <person name="Nishikawa T."/>
            <person name="Otsuki T."/>
            <person name="Sugiyama T."/>
            <person name="Irie R."/>
            <person name="Wakamatsu A."/>
            <person name="Hayashi K."/>
            <person name="Sato H."/>
            <person name="Nagai K."/>
            <person name="Kimura K."/>
            <person name="Makita H."/>
            <person name="Sekine M."/>
            <person name="Obayashi M."/>
            <person name="Nishi T."/>
            <person name="Shibahara T."/>
            <person name="Tanaka T."/>
            <person name="Ishii S."/>
            <person name="Yamamoto J."/>
            <person name="Saito K."/>
            <person name="Kawai Y."/>
            <person name="Isono Y."/>
            <person name="Nakamura Y."/>
            <person name="Nagahari K."/>
            <person name="Murakami K."/>
            <person name="Yasuda T."/>
            <person name="Iwayanagi T."/>
            <person name="Wagatsuma M."/>
            <person name="Shiratori A."/>
            <person name="Sudo H."/>
            <person name="Hosoiri T."/>
            <person name="Kaku Y."/>
            <person name="Kodaira H."/>
            <person name="Kondo H."/>
            <person name="Sugawara M."/>
            <person name="Takahashi M."/>
            <person name="Kanda K."/>
            <person name="Yokoi T."/>
            <person name="Furuya T."/>
            <person name="Kikkawa E."/>
            <person name="Omura Y."/>
            <person name="Abe K."/>
            <person name="Kamihara K."/>
            <person name="Katsuta N."/>
            <person name="Sato K."/>
            <person name="Tanikawa M."/>
            <person name="Yamazaki M."/>
            <person name="Ninomiya K."/>
            <person name="Ishibashi T."/>
            <person name="Yamashita H."/>
            <person name="Murakawa K."/>
            <person name="Fujimori K."/>
            <person name="Tanai H."/>
            <person name="Kimata M."/>
            <person name="Watanabe M."/>
            <person name="Hiraoka S."/>
            <person name="Chiba Y."/>
            <person name="Ishida S."/>
            <person name="Ono Y."/>
            <person name="Takiguchi S."/>
            <person name="Watanabe S."/>
            <person name="Yosida M."/>
            <person name="Hotuta T."/>
            <person name="Kusano J."/>
            <person name="Kanehori K."/>
            <person name="Takahashi-Fujii A."/>
            <person name="Hara H."/>
            <person name="Tanase T.-O."/>
            <person name="Nomura Y."/>
            <person name="Togiya S."/>
            <person name="Komai F."/>
            <person name="Hara R."/>
            <person name="Takeuchi K."/>
            <person name="Arita M."/>
            <person name="Imose N."/>
            <person name="Musashino K."/>
            <person name="Yuuki H."/>
            <person name="Oshima A."/>
            <person name="Sasaki N."/>
            <person name="Aotsuka S."/>
            <person name="Yoshikawa Y."/>
            <person name="Matsunawa H."/>
            <person name="Ichihara T."/>
            <person name="Shiohata N."/>
            <person name="Sano S."/>
            <person name="Moriya S."/>
            <person name="Momiyama H."/>
            <person name="Satoh N."/>
            <person name="Takami S."/>
            <person name="Terashima Y."/>
            <person name="Suzuki O."/>
            <person name="Nakagawa S."/>
            <person name="Senoh A."/>
            <person name="Mizoguchi H."/>
            <person name="Goto Y."/>
            <person name="Shimizu F."/>
            <person name="Wakebe H."/>
            <person name="Hishigaki H."/>
            <person name="Watanabe T."/>
            <person name="Sugiyama A."/>
            <person name="Takemoto M."/>
            <person name="Kawakami B."/>
            <person name="Yamazaki M."/>
            <person name="Watanabe K."/>
            <person name="Kumagai A."/>
            <person name="Itakura S."/>
            <person name="Fukuzumi Y."/>
            <person name="Fujimori Y."/>
            <person name="Komiyama M."/>
            <person name="Tashiro H."/>
            <person name="Tanigami A."/>
            <person name="Fujiwara T."/>
            <person name="Ono T."/>
            <person name="Yamada K."/>
            <person name="Fujii Y."/>
            <person name="Ozaki K."/>
            <person name="Hirao M."/>
            <person name="Ohmori Y."/>
            <person name="Kawabata A."/>
            <person name="Hikiji T."/>
            <person name="Kobatake N."/>
            <person name="Inagaki H."/>
            <person name="Ikema Y."/>
            <person name="Okamoto S."/>
            <person name="Okitani R."/>
            <person name="Kawakami T."/>
            <person name="Noguchi S."/>
            <person name="Itoh T."/>
            <person name="Shigeta K."/>
            <person name="Senba T."/>
            <person name="Matsumura K."/>
            <person name="Nakajima Y."/>
            <person name="Mizuno T."/>
            <person name="Morinaga M."/>
            <person name="Sasaki M."/>
            <person name="Togashi T."/>
            <person name="Oyama M."/>
            <person name="Hata H."/>
            <person name="Watanabe M."/>
            <person name="Komatsu T."/>
            <person name="Mizushima-Sugano J."/>
            <person name="Satoh T."/>
            <person name="Shirai Y."/>
            <person name="Takahashi Y."/>
            <person name="Nakagawa K."/>
            <person name="Okumura K."/>
            <person name="Nagase T."/>
            <person name="Nomura N."/>
            <person name="Kikuchi H."/>
            <person name="Masuho Y."/>
            <person name="Yamashita R."/>
            <person name="Nakai K."/>
            <person name="Yada T."/>
            <person name="Nakamura Y."/>
            <person name="Ohara O."/>
            <person name="Isogai T."/>
            <person name="Sugano S."/>
        </authorList>
    </citation>
    <scope>NUCLEOTIDE SEQUENCE [LARGE SCALE MRNA] (ISOFORM 1)</scope>
    <source>
        <tissue>Brain</tissue>
    </source>
</reference>
<reference key="2">
    <citation type="journal article" date="2004" name="Nature">
        <title>The DNA sequence and biology of human chromosome 19.</title>
        <authorList>
            <person name="Grimwood J."/>
            <person name="Gordon L.A."/>
            <person name="Olsen A.S."/>
            <person name="Terry A."/>
            <person name="Schmutz J."/>
            <person name="Lamerdin J.E."/>
            <person name="Hellsten U."/>
            <person name="Goodstein D."/>
            <person name="Couronne O."/>
            <person name="Tran-Gyamfi M."/>
            <person name="Aerts A."/>
            <person name="Altherr M."/>
            <person name="Ashworth L."/>
            <person name="Bajorek E."/>
            <person name="Black S."/>
            <person name="Branscomb E."/>
            <person name="Caenepeel S."/>
            <person name="Carrano A.V."/>
            <person name="Caoile C."/>
            <person name="Chan Y.M."/>
            <person name="Christensen M."/>
            <person name="Cleland C.A."/>
            <person name="Copeland A."/>
            <person name="Dalin E."/>
            <person name="Dehal P."/>
            <person name="Denys M."/>
            <person name="Detter J.C."/>
            <person name="Escobar J."/>
            <person name="Flowers D."/>
            <person name="Fotopulos D."/>
            <person name="Garcia C."/>
            <person name="Georgescu A.M."/>
            <person name="Glavina T."/>
            <person name="Gomez M."/>
            <person name="Gonzales E."/>
            <person name="Groza M."/>
            <person name="Hammon N."/>
            <person name="Hawkins T."/>
            <person name="Haydu L."/>
            <person name="Ho I."/>
            <person name="Huang W."/>
            <person name="Israni S."/>
            <person name="Jett J."/>
            <person name="Kadner K."/>
            <person name="Kimball H."/>
            <person name="Kobayashi A."/>
            <person name="Larionov V."/>
            <person name="Leem S.-H."/>
            <person name="Lopez F."/>
            <person name="Lou Y."/>
            <person name="Lowry S."/>
            <person name="Malfatti S."/>
            <person name="Martinez D."/>
            <person name="McCready P.M."/>
            <person name="Medina C."/>
            <person name="Morgan J."/>
            <person name="Nelson K."/>
            <person name="Nolan M."/>
            <person name="Ovcharenko I."/>
            <person name="Pitluck S."/>
            <person name="Pollard M."/>
            <person name="Popkie A.P."/>
            <person name="Predki P."/>
            <person name="Quan G."/>
            <person name="Ramirez L."/>
            <person name="Rash S."/>
            <person name="Retterer J."/>
            <person name="Rodriguez A."/>
            <person name="Rogers S."/>
            <person name="Salamov A."/>
            <person name="Salazar A."/>
            <person name="She X."/>
            <person name="Smith D."/>
            <person name="Slezak T."/>
            <person name="Solovyev V."/>
            <person name="Thayer N."/>
            <person name="Tice H."/>
            <person name="Tsai M."/>
            <person name="Ustaszewska A."/>
            <person name="Vo N."/>
            <person name="Wagner M."/>
            <person name="Wheeler J."/>
            <person name="Wu K."/>
            <person name="Xie G."/>
            <person name="Yang J."/>
            <person name="Dubchak I."/>
            <person name="Furey T.S."/>
            <person name="DeJong P."/>
            <person name="Dickson M."/>
            <person name="Gordon D."/>
            <person name="Eichler E.E."/>
            <person name="Pennacchio L.A."/>
            <person name="Richardson P."/>
            <person name="Stubbs L."/>
            <person name="Rokhsar D.S."/>
            <person name="Myers R.M."/>
            <person name="Rubin E.M."/>
            <person name="Lucas S.M."/>
        </authorList>
    </citation>
    <scope>NUCLEOTIDE SEQUENCE [LARGE SCALE GENOMIC DNA]</scope>
</reference>
<reference key="3">
    <citation type="journal article" date="1999" name="DNA Res.">
        <title>Characterization of cDNA clones selected by the GeneMark analysis from size-fractionated cDNA libraries from human brain.</title>
        <authorList>
            <person name="Hirosawa M."/>
            <person name="Nagase T."/>
            <person name="Ishikawa K."/>
            <person name="Kikuno R."/>
            <person name="Nomura N."/>
            <person name="Ohara O."/>
        </authorList>
    </citation>
    <scope>NUCLEOTIDE SEQUENCE [LARGE SCALE MRNA] OF 293-635 (ISOFORM 2)</scope>
    <source>
        <tissue>Brain</tissue>
    </source>
</reference>
<name>PNM8B_HUMAN</name>
<organism>
    <name type="scientific">Homo sapiens</name>
    <name type="common">Human</name>
    <dbReference type="NCBI Taxonomy" id="9606"/>
    <lineage>
        <taxon>Eukaryota</taxon>
        <taxon>Metazoa</taxon>
        <taxon>Chordata</taxon>
        <taxon>Craniata</taxon>
        <taxon>Vertebrata</taxon>
        <taxon>Euteleostomi</taxon>
        <taxon>Mammalia</taxon>
        <taxon>Eutheria</taxon>
        <taxon>Euarchontoglires</taxon>
        <taxon>Primates</taxon>
        <taxon>Haplorrhini</taxon>
        <taxon>Catarrhini</taxon>
        <taxon>Hominidae</taxon>
        <taxon>Homo</taxon>
    </lineage>
</organism>
<evidence type="ECO:0000256" key="1">
    <source>
        <dbReference type="SAM" id="MobiDB-lite"/>
    </source>
</evidence>
<evidence type="ECO:0000303" key="2">
    <source>
    </source>
</evidence>
<evidence type="ECO:0000305" key="3"/>
<evidence type="ECO:0000312" key="4">
    <source>
        <dbReference type="HGNC" id="HGNC:29206"/>
    </source>
</evidence>
<gene>
    <name evidence="4" type="primary">PNMA8B</name>
    <name type="synonym">KIAA1183</name>
    <name type="synonym">PNMAL2</name>
</gene>
<comment type="alternative products">
    <event type="alternative splicing"/>
    <isoform>
        <id>Q9ULN7-5</id>
        <name>2</name>
        <sequence type="displayed"/>
    </isoform>
    <isoform>
        <id>Q9ULN7-1</id>
        <name>1</name>
        <sequence type="described" ref="VSP_059423 VSP_059424"/>
    </isoform>
</comment>
<comment type="similarity">
    <text evidence="3">Belongs to the PNMA family.</text>
</comment>
<accession>Q9ULN7</accession>
<accession>C9JGD5</accession>
<accession>M0R374</accession>
<accession>Q08E79</accession>
<accession>Q0D2F9</accession>
<accession>Q6ZVD1</accession>
<dbReference type="EMBL" id="AK124720">
    <property type="protein sequence ID" value="BAC85931.1"/>
    <property type="molecule type" value="mRNA"/>
</dbReference>
<dbReference type="EMBL" id="AC011484">
    <property type="status" value="NOT_ANNOTATED_CDS"/>
    <property type="molecule type" value="Genomic_DNA"/>
</dbReference>
<dbReference type="EMBL" id="AB033009">
    <property type="protein sequence ID" value="BAA86497.1"/>
    <property type="molecule type" value="mRNA"/>
</dbReference>
<dbReference type="CCDS" id="CCDS59400.1">
    <molecule id="Q9ULN7-5"/>
</dbReference>
<dbReference type="RefSeq" id="NP_065760.1">
    <molecule id="Q9ULN7-5"/>
    <property type="nucleotide sequence ID" value="NM_020709.3"/>
</dbReference>
<dbReference type="BioGRID" id="121539">
    <property type="interactions" value="1"/>
</dbReference>
<dbReference type="STRING" id="9606.ENSP00000473036"/>
<dbReference type="GlyGen" id="Q9ULN7">
    <property type="glycosylation" value="4 sites"/>
</dbReference>
<dbReference type="iPTMnet" id="Q9ULN7"/>
<dbReference type="PhosphoSitePlus" id="Q9ULN7"/>
<dbReference type="BioMuta" id="PNMA8B"/>
<dbReference type="DMDM" id="408360249"/>
<dbReference type="jPOST" id="Q9ULN7"/>
<dbReference type="MassIVE" id="Q9ULN7"/>
<dbReference type="PaxDb" id="9606-ENSP00000473036"/>
<dbReference type="PeptideAtlas" id="Q9ULN7"/>
<dbReference type="ProteomicsDB" id="10092"/>
<dbReference type="ProteomicsDB" id="85080">
    <molecule id="Q9ULN7-1"/>
</dbReference>
<dbReference type="Antibodypedia" id="49341">
    <property type="antibodies" value="6 antibodies from 6 providers"/>
</dbReference>
<dbReference type="DNASU" id="57469"/>
<dbReference type="Ensembl" id="ENST00000599531.2">
    <molecule id="Q9ULN7-5"/>
    <property type="protein sequence ID" value="ENSP00000473036.1"/>
    <property type="gene ID" value="ENSG00000204851.7"/>
</dbReference>
<dbReference type="GeneID" id="57469"/>
<dbReference type="KEGG" id="hsa:57469"/>
<dbReference type="MANE-Select" id="ENST00000599531.2">
    <property type="protein sequence ID" value="ENSP00000473036.1"/>
    <property type="RefSeq nucleotide sequence ID" value="NM_020709.3"/>
    <property type="RefSeq protein sequence ID" value="NP_065760.1"/>
</dbReference>
<dbReference type="UCSC" id="uc002pes.3">
    <molecule id="Q9ULN7-5"/>
    <property type="organism name" value="human"/>
</dbReference>
<dbReference type="AGR" id="HGNC:29206"/>
<dbReference type="CTD" id="57469"/>
<dbReference type="GeneCards" id="PNMA8B"/>
<dbReference type="HGNC" id="HGNC:29206">
    <property type="gene designation" value="PNMA8B"/>
</dbReference>
<dbReference type="HPA" id="ENSG00000204851">
    <property type="expression patterns" value="Group enriched (adrenal gland, brain)"/>
</dbReference>
<dbReference type="MIM" id="620159">
    <property type="type" value="gene"/>
</dbReference>
<dbReference type="neXtProt" id="NX_Q9ULN7"/>
<dbReference type="OpenTargets" id="ENSG00000204851"/>
<dbReference type="PharmGKB" id="PA162399847"/>
<dbReference type="VEuPathDB" id="HostDB:ENSG00000204851"/>
<dbReference type="eggNOG" id="KOG0657">
    <property type="taxonomic scope" value="Eukaryota"/>
</dbReference>
<dbReference type="GeneTree" id="ENSGT01030000234522"/>
<dbReference type="HOGENOM" id="CLU_036264_1_0_1"/>
<dbReference type="InParanoid" id="Q9ULN7"/>
<dbReference type="OMA" id="MSKDTSG"/>
<dbReference type="OrthoDB" id="115435at2759"/>
<dbReference type="PAN-GO" id="Q9ULN7">
    <property type="GO annotations" value="0 GO annotations based on evolutionary models"/>
</dbReference>
<dbReference type="PhylomeDB" id="Q9ULN7"/>
<dbReference type="TreeFam" id="TF335054"/>
<dbReference type="PathwayCommons" id="Q9ULN7"/>
<dbReference type="BioGRID-ORCS" id="57469">
    <property type="hits" value="9 hits in 1133 CRISPR screens"/>
</dbReference>
<dbReference type="GenomeRNAi" id="57469"/>
<dbReference type="Pharos" id="Q9ULN7">
    <property type="development level" value="Tdark"/>
</dbReference>
<dbReference type="PRO" id="PR:Q9ULN7"/>
<dbReference type="Proteomes" id="UP000005640">
    <property type="component" value="Chromosome 19"/>
</dbReference>
<dbReference type="RNAct" id="Q9ULN7">
    <property type="molecule type" value="protein"/>
</dbReference>
<dbReference type="Bgee" id="ENSG00000204851">
    <property type="expression patterns" value="Expressed in prefrontal cortex and 113 other cell types or tissues"/>
</dbReference>
<dbReference type="InterPro" id="IPR026523">
    <property type="entry name" value="PNMA"/>
</dbReference>
<dbReference type="InterPro" id="IPR048271">
    <property type="entry name" value="PNMA_N"/>
</dbReference>
<dbReference type="PANTHER" id="PTHR23095">
    <property type="entry name" value="PARANEOPLASTIC ANTIGEN"/>
    <property type="match status" value="1"/>
</dbReference>
<dbReference type="PANTHER" id="PTHR23095:SF45">
    <property type="entry name" value="PARANEOPLASTIC ANTIGEN-LIKE PROTEIN 8B"/>
    <property type="match status" value="1"/>
</dbReference>
<dbReference type="Pfam" id="PF20846">
    <property type="entry name" value="PNMA_N"/>
    <property type="match status" value="1"/>
</dbReference>
<protein>
    <recommendedName>
        <fullName>Paraneoplastic antigen-like protein 8B</fullName>
    </recommendedName>
    <alternativeName>
        <fullName>PNMA-like protein 2</fullName>
    </alternativeName>
</protein>